<reference key="1">
    <citation type="journal article" date="2005" name="Cell Res.">
        <title>The matrix metalloproteinase stromelysin-3 cleaves laminin receptor at two distinct sites between the transmembrane domain and laminin binding sequence within the extracellular domain.</title>
        <authorList>
            <person name="Amano T."/>
            <person name="Kwak O."/>
            <person name="Fu L."/>
            <person name="Marshak A."/>
            <person name="Shi Y.-B."/>
        </authorList>
    </citation>
    <scope>NUCLEOTIDE SEQUENCE [MRNA]</scope>
    <scope>CLEAVAGE BY ST3</scope>
    <source>
        <tissue>Small intestine</tissue>
    </source>
</reference>
<reference key="2">
    <citation type="submission" date="2006-09" db="EMBL/GenBank/DDBJ databases">
        <authorList>
            <consortium name="NIH - Xenopus Gene Collection (XGC) project"/>
        </authorList>
    </citation>
    <scope>NUCLEOTIDE SEQUENCE [LARGE SCALE MRNA]</scope>
    <source>
        <tissue>Testis</tissue>
    </source>
</reference>
<reference key="3">
    <citation type="journal article" date="2005" name="Dev. Dyn.">
        <title>Spatio-temporal regulation and cleavage by matrix metalloproteinase stromelysin-3 implicate a role for laminin receptor in intestinal remodeling during Xenopus laevis metamorphosis.</title>
        <authorList>
            <person name="Amano T."/>
            <person name="Fu L."/>
            <person name="Marshak A."/>
            <person name="Kwak O."/>
            <person name="Shi Y.-B."/>
        </authorList>
    </citation>
    <scope>DEVELOPMENTAL STAGE</scope>
</reference>
<comment type="function">
    <text evidence="1">Required for the assembly and/or stability of the 40S ribosomal subunit. Required for the processing of the 20S rRNA-precursor to mature 18S rRNA in a late step of the maturation of 40S ribosomal subunits. Also functions as a cell surface receptor for laminin. Plays a role in cell adhesion to the basement membrane and in the consequent activation of signaling transduction pathways. May play a role in cell fate determination and tissue morphogenesis.</text>
</comment>
<comment type="subunit">
    <text evidence="1">Monomer (37LRP) and homodimer (67LR). Component of the small ribosomal subunit. Mature ribosomes consist of a small (40S) and a large (60S) subunit. The 40S subunit contains about 33 different proteins and 1 molecule of RNA (18S). The 60S subunit contains about 49 different proteins and 3 molecules of RNA (28S, 5.8S and 5S). Interacts with rps21. Interacts with several laminins including at least lamb1. Interacts with mdk.</text>
</comment>
<comment type="subcellular location">
    <subcellularLocation>
        <location evidence="1">Cell membrane</location>
    </subcellularLocation>
    <subcellularLocation>
        <location evidence="1">Cytoplasm</location>
    </subcellularLocation>
    <subcellularLocation>
        <location evidence="1">Nucleus</location>
    </subcellularLocation>
    <text evidence="1">67LR is found at the surface of the plasma membrane, with its C-terminal laminin-binding domain accessible to extracellular ligands. 37LRP is found at the cell surface, in the cytoplasm and in the nucleus.</text>
</comment>
<comment type="developmental stage">
    <text evidence="3">Expressed in the intestinal epithelium of premetamorphic tadpoles. During intestinal metamorphosis, down-regulated in the apoptotic epithelium and concurrently up-regulated in the connective tissue but with little expression in the developing adult epithelium. Toward the end of metamorphosis, expressed in adult epithelial cells as they differentiate.</text>
</comment>
<comment type="PTM">
    <text evidence="1">Acylated. Acylation may be a prerequisite for conversion of the monomeric 37 kDa laminin receptor precursor (37LRP) to the mature dimeric 67 kDa laminin receptor (67LR), and may provide a mechanism for membrane association.</text>
</comment>
<comment type="PTM">
    <text>Cleaved by stromelysin-3 (ST3) at the cell surface. Cleavage by stromelysin-3 may be a mechanism to alter cell-extracellular matrix interactions.</text>
</comment>
<comment type="miscellaneous">
    <text>This protein appears to have acquired a second function as a laminin receptor specifically in the vertebrate lineage.</text>
</comment>
<comment type="similarity">
    <text evidence="1">Belongs to the universal ribosomal protein uS2 family.</text>
</comment>
<protein>
    <recommendedName>
        <fullName evidence="1">Small ribosomal subunit protein uS2</fullName>
    </recommendedName>
    <alternativeName>
        <fullName evidence="1">37 kDa laminin receptor precursor</fullName>
        <shortName evidence="1">37LRP</shortName>
    </alternativeName>
    <alternativeName>
        <fullName evidence="1">37/67 kDa laminin receptor</fullName>
        <shortName evidence="1">LRP/LR</shortName>
    </alternativeName>
    <alternativeName>
        <fullName evidence="4">40S ribosomal protein SA</fullName>
    </alternativeName>
    <alternativeName>
        <fullName evidence="1">67 kDa laminin receptor</fullName>
        <shortName evidence="1">67LR</shortName>
    </alternativeName>
    <alternativeName>
        <fullName evidence="1">Laminin receptor 1</fullName>
        <shortName evidence="1">LamR</shortName>
    </alternativeName>
    <alternativeName>
        <fullName evidence="1">Laminin-binding protein precursor p40</fullName>
        <shortName evidence="1">LBP/p40</shortName>
    </alternativeName>
</protein>
<proteinExistence type="evidence at protein level"/>
<sequence>MSGGLDVLQMKEEDVLKFLAAGTHLGGTNLDFQMEQYIYKRKSDGIYIINLKRTWEKLLLAARAIVAIENPADVCVISSRNTGQRAVLKFASASGATPIAGRFTPGTFTNQIQAAFREPRLLVVTDPRADHQPITEASYVNIPTIALCNTDSPLRYVDIAIPCNNKGAHSVGLMWWMLAREVLRMRGTISREHPWEVMPDLYFYRDPEEIEKEEQAAAEKATTKEEFQGEWTAPVAEFPQAEVADWSEGVQVPSVPIQQFTAERTDVPPAPKPTEDWSTQPASTDDWSAAPTAQASEWTGTTTEWS</sequence>
<evidence type="ECO:0000255" key="1">
    <source>
        <dbReference type="HAMAP-Rule" id="MF_03016"/>
    </source>
</evidence>
<evidence type="ECO:0000256" key="2">
    <source>
        <dbReference type="SAM" id="MobiDB-lite"/>
    </source>
</evidence>
<evidence type="ECO:0000269" key="3">
    <source>
    </source>
</evidence>
<evidence type="ECO:0000305" key="4"/>
<organism>
    <name type="scientific">Xenopus laevis</name>
    <name type="common">African clawed frog</name>
    <dbReference type="NCBI Taxonomy" id="8355"/>
    <lineage>
        <taxon>Eukaryota</taxon>
        <taxon>Metazoa</taxon>
        <taxon>Chordata</taxon>
        <taxon>Craniata</taxon>
        <taxon>Vertebrata</taxon>
        <taxon>Euteleostomi</taxon>
        <taxon>Amphibia</taxon>
        <taxon>Batrachia</taxon>
        <taxon>Anura</taxon>
        <taxon>Pipoidea</taxon>
        <taxon>Pipidae</taxon>
        <taxon>Xenopodinae</taxon>
        <taxon>Xenopus</taxon>
        <taxon>Xenopus</taxon>
    </lineage>
</organism>
<feature type="initiator methionine" description="Removed" evidence="1">
    <location>
        <position position="1"/>
    </location>
</feature>
<feature type="chain" id="PRO_0000371573" description="Small ribosomal subunit protein uS2">
    <location>
        <begin position="2"/>
        <end position="306"/>
    </location>
</feature>
<feature type="repeat" description="[DE]-W-[ST] 1">
    <location>
        <begin position="230"/>
        <end position="232"/>
    </location>
</feature>
<feature type="repeat" description="[DE]-W-[ST] 2">
    <location>
        <begin position="245"/>
        <end position="247"/>
    </location>
</feature>
<feature type="repeat" description="[DE]-W-[ST] 3">
    <location>
        <begin position="276"/>
        <end position="278"/>
    </location>
</feature>
<feature type="repeat" description="[DE]-W-[ST] 4">
    <location>
        <begin position="286"/>
        <end position="288"/>
    </location>
</feature>
<feature type="repeat" description="[DE]-W-[ST] 5">
    <location>
        <begin position="304"/>
        <end position="306"/>
    </location>
</feature>
<feature type="region of interest" description="Laminin-binding" evidence="1">
    <location>
        <begin position="161"/>
        <end position="180"/>
    </location>
</feature>
<feature type="region of interest" description="Laminin-binding" evidence="1">
    <location>
        <begin position="205"/>
        <end position="229"/>
    </location>
</feature>
<feature type="region of interest" description="Laminin-binding" evidence="1">
    <location>
        <begin position="242"/>
        <end position="306"/>
    </location>
</feature>
<feature type="region of interest" description="Disordered" evidence="2">
    <location>
        <begin position="247"/>
        <end position="306"/>
    </location>
</feature>
<feature type="compositionally biased region" description="Polar residues" evidence="2">
    <location>
        <begin position="276"/>
        <end position="306"/>
    </location>
</feature>
<feature type="site" description="Cleavage; by ST3; site 1" evidence="1">
    <location>
        <begin position="115"/>
        <end position="116"/>
    </location>
</feature>
<feature type="site" description="Cleavage; by ST3; site 2" evidence="1">
    <location>
        <begin position="133"/>
        <end position="134"/>
    </location>
</feature>
<feature type="modified residue" description="N-acetylserine" evidence="1">
    <location>
        <position position="2"/>
    </location>
</feature>
<dbReference type="EMBL" id="AY730625">
    <property type="protein sequence ID" value="AAW62261.1"/>
    <property type="molecule type" value="mRNA"/>
</dbReference>
<dbReference type="EMBL" id="BC123144">
    <property type="protein sequence ID" value="AAI23145.1"/>
    <property type="molecule type" value="mRNA"/>
</dbReference>
<dbReference type="RefSeq" id="XP_018112404.1">
    <property type="nucleotide sequence ID" value="XM_018256915.1"/>
</dbReference>
<dbReference type="RefSeq" id="XP_018112405.1">
    <property type="nucleotide sequence ID" value="XM_018256916.1"/>
</dbReference>
<dbReference type="SMR" id="Q3ZM03"/>
<dbReference type="BioGRID" id="591817">
    <property type="interactions" value="2"/>
</dbReference>
<dbReference type="IntAct" id="Q3ZM03">
    <property type="interactions" value="1"/>
</dbReference>
<dbReference type="DNASU" id="733335"/>
<dbReference type="GeneID" id="733335"/>
<dbReference type="KEGG" id="xla:733335"/>
<dbReference type="AGR" id="Xenbase:XB-GENE-17333214"/>
<dbReference type="CTD" id="733335"/>
<dbReference type="Xenbase" id="XB-GENE-17333214">
    <property type="gene designation" value="rpsa.L"/>
</dbReference>
<dbReference type="OMA" id="WEGDAEW"/>
<dbReference type="OrthoDB" id="414863at2759"/>
<dbReference type="Proteomes" id="UP000186698">
    <property type="component" value="Chromosome 4L"/>
</dbReference>
<dbReference type="Bgee" id="733335">
    <property type="expression patterns" value="Expressed in internal ear and 19 other cell types or tissues"/>
</dbReference>
<dbReference type="GO" id="GO:0022627">
    <property type="term" value="C:cytosolic small ribosomal subunit"/>
    <property type="evidence" value="ECO:0000318"/>
    <property type="project" value="GO_Central"/>
</dbReference>
<dbReference type="GO" id="GO:0005634">
    <property type="term" value="C:nucleus"/>
    <property type="evidence" value="ECO:0007669"/>
    <property type="project" value="UniProtKB-SubCell"/>
</dbReference>
<dbReference type="GO" id="GO:0005886">
    <property type="term" value="C:plasma membrane"/>
    <property type="evidence" value="ECO:0007669"/>
    <property type="project" value="UniProtKB-SubCell"/>
</dbReference>
<dbReference type="GO" id="GO:0043236">
    <property type="term" value="F:laminin binding"/>
    <property type="evidence" value="ECO:0007669"/>
    <property type="project" value="UniProtKB-UniRule"/>
</dbReference>
<dbReference type="GO" id="GO:0005055">
    <property type="term" value="F:laminin receptor activity"/>
    <property type="evidence" value="ECO:0007669"/>
    <property type="project" value="UniProtKB-UniRule"/>
</dbReference>
<dbReference type="GO" id="GO:0003735">
    <property type="term" value="F:structural constituent of ribosome"/>
    <property type="evidence" value="ECO:0000318"/>
    <property type="project" value="GO_Central"/>
</dbReference>
<dbReference type="GO" id="GO:0002181">
    <property type="term" value="P:cytoplasmic translation"/>
    <property type="evidence" value="ECO:0000318"/>
    <property type="project" value="GO_Central"/>
</dbReference>
<dbReference type="GO" id="GO:0000028">
    <property type="term" value="P:ribosomal small subunit assembly"/>
    <property type="evidence" value="ECO:0000318"/>
    <property type="project" value="GO_Central"/>
</dbReference>
<dbReference type="CDD" id="cd01425">
    <property type="entry name" value="RPS2"/>
    <property type="match status" value="1"/>
</dbReference>
<dbReference type="FunFam" id="3.40.50.10490:FF:000012">
    <property type="entry name" value="40S ribosomal protein SA"/>
    <property type="match status" value="1"/>
</dbReference>
<dbReference type="Gene3D" id="3.40.50.10490">
    <property type="entry name" value="Glucose-6-phosphate isomerase like protein, domain 1"/>
    <property type="match status" value="1"/>
</dbReference>
<dbReference type="HAMAP" id="MF_03015">
    <property type="entry name" value="Ribosomal_S2_euk"/>
    <property type="match status" value="1"/>
</dbReference>
<dbReference type="HAMAP" id="MF_03016">
    <property type="entry name" value="Ribosomal_S2_laminin_receptor"/>
    <property type="match status" value="1"/>
</dbReference>
<dbReference type="InterPro" id="IPR001865">
    <property type="entry name" value="Ribosomal_uS2"/>
</dbReference>
<dbReference type="InterPro" id="IPR032281">
    <property type="entry name" value="Ribosomal_uS2_C"/>
</dbReference>
<dbReference type="InterPro" id="IPR018130">
    <property type="entry name" value="Ribosomal_uS2_CS"/>
</dbReference>
<dbReference type="InterPro" id="IPR027498">
    <property type="entry name" value="Ribosomal_uS2_euk"/>
</dbReference>
<dbReference type="InterPro" id="IPR005707">
    <property type="entry name" value="Ribosomal_uS2_euk/arc"/>
</dbReference>
<dbReference type="InterPro" id="IPR023591">
    <property type="entry name" value="Ribosomal_uS2_flav_dom_sf"/>
</dbReference>
<dbReference type="InterPro" id="IPR027504">
    <property type="entry name" value="Ribosomal_uS2_vert"/>
</dbReference>
<dbReference type="NCBIfam" id="TIGR01012">
    <property type="entry name" value="uS2_euk_arch"/>
    <property type="match status" value="1"/>
</dbReference>
<dbReference type="PANTHER" id="PTHR11489">
    <property type="entry name" value="40S RIBOSOMAL PROTEIN SA"/>
    <property type="match status" value="1"/>
</dbReference>
<dbReference type="Pfam" id="PF16122">
    <property type="entry name" value="40S_SA_C"/>
    <property type="match status" value="1"/>
</dbReference>
<dbReference type="Pfam" id="PF00318">
    <property type="entry name" value="Ribosomal_S2"/>
    <property type="match status" value="2"/>
</dbReference>
<dbReference type="PRINTS" id="PR00395">
    <property type="entry name" value="RIBOSOMALS2"/>
</dbReference>
<dbReference type="SUPFAM" id="SSF52313">
    <property type="entry name" value="Ribosomal protein S2"/>
    <property type="match status" value="1"/>
</dbReference>
<dbReference type="PROSITE" id="PS00962">
    <property type="entry name" value="RIBOSOMAL_S2_1"/>
    <property type="match status" value="1"/>
</dbReference>
<dbReference type="PROSITE" id="PS00963">
    <property type="entry name" value="RIBOSOMAL_S2_2"/>
    <property type="match status" value="1"/>
</dbReference>
<gene>
    <name type="primary">rpsa</name>
</gene>
<name>RSSA_XENLA</name>
<keyword id="KW-0007">Acetylation</keyword>
<keyword id="KW-1003">Cell membrane</keyword>
<keyword id="KW-0963">Cytoplasm</keyword>
<keyword id="KW-0472">Membrane</keyword>
<keyword id="KW-0539">Nucleus</keyword>
<keyword id="KW-0675">Receptor</keyword>
<keyword id="KW-1185">Reference proteome</keyword>
<keyword id="KW-0677">Repeat</keyword>
<keyword id="KW-0687">Ribonucleoprotein</keyword>
<keyword id="KW-0689">Ribosomal protein</keyword>
<accession>Q3ZM03</accession>